<feature type="chain" id="PRO_0000109532" description="Signal peptidase IB">
    <location>
        <begin position="1"/>
        <end position="191"/>
    </location>
</feature>
<feature type="topological domain" description="Cytoplasmic" evidence="2">
    <location>
        <begin position="1"/>
        <end position="7"/>
    </location>
</feature>
<feature type="transmembrane region" description="Helical" evidence="2">
    <location>
        <begin position="8"/>
        <end position="28"/>
    </location>
</feature>
<feature type="topological domain" description="Extracellular" evidence="2">
    <location>
        <begin position="29"/>
        <end position="191"/>
    </location>
</feature>
<feature type="active site" evidence="1">
    <location>
        <position position="36"/>
    </location>
</feature>
<feature type="active site" evidence="1">
    <location>
        <position position="77"/>
    </location>
</feature>
<keyword id="KW-1003">Cell membrane</keyword>
<keyword id="KW-0378">Hydrolase</keyword>
<keyword id="KW-0472">Membrane</keyword>
<keyword id="KW-0645">Protease</keyword>
<keyword id="KW-0812">Transmembrane</keyword>
<keyword id="KW-1133">Transmembrane helix</keyword>
<organism>
    <name type="scientific">Staphylococcus aureus</name>
    <dbReference type="NCBI Taxonomy" id="1280"/>
    <lineage>
        <taxon>Bacteria</taxon>
        <taxon>Bacillati</taxon>
        <taxon>Bacillota</taxon>
        <taxon>Bacilli</taxon>
        <taxon>Bacillales</taxon>
        <taxon>Staphylococcaceae</taxon>
        <taxon>Staphylococcus</taxon>
    </lineage>
</organism>
<sequence>MKKELLEWIISIAVAFVILFIVGKFIVTPYTIKGESMDPTLKDGERVAVNIIGYKTGGLEKGNVVVFHANKNDDYVKRVIGVPGDKVEYKNDTLYVNGKKQDEPYLNYNLKHKQGDYITGTFQVKDLPNANPKSNVIPKGKYLVLGDNREVSKDSRAFGLIDEDQIVGKVSFRFWPFSEFKHNFNPENTKN</sequence>
<comment type="function">
    <text>Essential for cell viability.</text>
</comment>
<comment type="catalytic activity">
    <reaction>
        <text>Cleavage of hydrophobic, N-terminal signal or leader sequences from secreted and periplasmic proteins.</text>
        <dbReference type="EC" id="3.4.21.89"/>
    </reaction>
</comment>
<comment type="subcellular location">
    <subcellularLocation>
        <location evidence="3">Cell membrane</location>
        <topology evidence="3">Single-pass type II membrane protein</topology>
    </subcellularLocation>
</comment>
<comment type="similarity">
    <text evidence="3">Belongs to the peptidase S26 family.</text>
</comment>
<dbReference type="EC" id="3.4.21.89"/>
<dbReference type="EMBL" id="U65000">
    <property type="protein sequence ID" value="AAC44435.1"/>
    <property type="molecule type" value="Genomic_DNA"/>
</dbReference>
<dbReference type="SMR" id="P0A070"/>
<dbReference type="BindingDB" id="P0A070"/>
<dbReference type="ChEMBL" id="CHEMBL2429707"/>
<dbReference type="MEROPS" id="S26.016"/>
<dbReference type="OMA" id="DNRANSW"/>
<dbReference type="BRENDA" id="3.4.21.89">
    <property type="organism ID" value="3352"/>
</dbReference>
<dbReference type="GO" id="GO:0005886">
    <property type="term" value="C:plasma membrane"/>
    <property type="evidence" value="ECO:0007669"/>
    <property type="project" value="UniProtKB-SubCell"/>
</dbReference>
<dbReference type="GO" id="GO:0004252">
    <property type="term" value="F:serine-type endopeptidase activity"/>
    <property type="evidence" value="ECO:0007669"/>
    <property type="project" value="UniProtKB-EC"/>
</dbReference>
<dbReference type="GO" id="GO:0006465">
    <property type="term" value="P:signal peptide processing"/>
    <property type="evidence" value="ECO:0007669"/>
    <property type="project" value="InterPro"/>
</dbReference>
<dbReference type="CDD" id="cd06530">
    <property type="entry name" value="S26_SPase_I"/>
    <property type="match status" value="1"/>
</dbReference>
<dbReference type="FunFam" id="2.10.109.10:FF:000008">
    <property type="entry name" value="Signal peptidase I"/>
    <property type="match status" value="1"/>
</dbReference>
<dbReference type="Gene3D" id="2.10.109.10">
    <property type="entry name" value="Umud Fragment, subunit A"/>
    <property type="match status" value="1"/>
</dbReference>
<dbReference type="InterPro" id="IPR036286">
    <property type="entry name" value="LexA/Signal_pep-like_sf"/>
</dbReference>
<dbReference type="InterPro" id="IPR000223">
    <property type="entry name" value="Pept_S26A_signal_pept_1"/>
</dbReference>
<dbReference type="InterPro" id="IPR019758">
    <property type="entry name" value="Pept_S26A_signal_pept_1_CS"/>
</dbReference>
<dbReference type="InterPro" id="IPR019757">
    <property type="entry name" value="Pept_S26A_signal_pept_1_Lys-AS"/>
</dbReference>
<dbReference type="InterPro" id="IPR019756">
    <property type="entry name" value="Pept_S26A_signal_pept_1_Ser-AS"/>
</dbReference>
<dbReference type="InterPro" id="IPR019533">
    <property type="entry name" value="Peptidase_S26"/>
</dbReference>
<dbReference type="NCBIfam" id="TIGR02227">
    <property type="entry name" value="sigpep_I_bact"/>
    <property type="match status" value="1"/>
</dbReference>
<dbReference type="PANTHER" id="PTHR43390:SF1">
    <property type="entry name" value="CHLOROPLAST PROCESSING PEPTIDASE"/>
    <property type="match status" value="1"/>
</dbReference>
<dbReference type="PANTHER" id="PTHR43390">
    <property type="entry name" value="SIGNAL PEPTIDASE I"/>
    <property type="match status" value="1"/>
</dbReference>
<dbReference type="Pfam" id="PF10502">
    <property type="entry name" value="Peptidase_S26"/>
    <property type="match status" value="1"/>
</dbReference>
<dbReference type="PRINTS" id="PR00727">
    <property type="entry name" value="LEADERPTASE"/>
</dbReference>
<dbReference type="SUPFAM" id="SSF51306">
    <property type="entry name" value="LexA/Signal peptidase"/>
    <property type="match status" value="1"/>
</dbReference>
<dbReference type="PROSITE" id="PS00501">
    <property type="entry name" value="SPASE_I_1"/>
    <property type="match status" value="1"/>
</dbReference>
<dbReference type="PROSITE" id="PS00760">
    <property type="entry name" value="SPASE_I_2"/>
    <property type="match status" value="1"/>
</dbReference>
<dbReference type="PROSITE" id="PS00761">
    <property type="entry name" value="SPASE_I_3"/>
    <property type="match status" value="1"/>
</dbReference>
<gene>
    <name type="primary">spsB</name>
</gene>
<protein>
    <recommendedName>
        <fullName>Signal peptidase IB</fullName>
        <shortName>SPase IB</shortName>
        <ecNumber>3.4.21.89</ecNumber>
    </recommendedName>
    <alternativeName>
        <fullName>Leader peptidase IB</fullName>
    </alternativeName>
</protein>
<proteinExistence type="inferred from homology"/>
<evidence type="ECO:0000250" key="1"/>
<evidence type="ECO:0000255" key="2"/>
<evidence type="ECO:0000305" key="3"/>
<accession>P0A070</accession>
<accession>P72365</accession>
<name>LEP_STAAU</name>
<reference key="1">
    <citation type="journal article" date="1996" name="J. Bacteriol.">
        <title>Molecular cloning and expression of the spsB gene encoding an essential type I signal peptidase from Staphylococcus aureus.</title>
        <authorList>
            <person name="Cregg K.M."/>
            <person name="Wilding E.I."/>
            <person name="Black M.T."/>
        </authorList>
    </citation>
    <scope>NUCLEOTIDE SEQUENCE [GENOMIC DNA]</scope>
    <source>
        <strain>WCUH29 / NCIMB 40771</strain>
    </source>
</reference>